<comment type="function">
    <text evidence="1">Plays an important role in modulating synaptic transmission and plasticity in the hippocampus, probably by affecting the trafficking and localization ofAMPA-type glutamate receptors in the postsynaptic density.</text>
</comment>
<comment type="subunit">
    <text evidence="1 5 6">Homodimer (PubMed:35940132). Interacts with NGF (PubMed:15710408). Interacts with DLG4/PSD95 and PICK1 (By similarity).</text>
</comment>
<comment type="interaction">
    <interactant intactId="EBI-7484437">
        <id>Q9UPU3</id>
    </interactant>
    <interactant intactId="EBI-930964">
        <id>P54253</id>
        <label>ATXN1</label>
    </interactant>
    <organismsDiffer>false</organismsDiffer>
    <experiments>3</experiments>
</comment>
<comment type="interaction">
    <interactant intactId="EBI-7484437">
        <id>Q9UPU3</id>
    </interactant>
    <interactant intactId="EBI-932471">
        <id>Q9BRQ0</id>
        <label>PYGO2</label>
    </interactant>
    <organismsDiffer>false</organismsDiffer>
    <experiments>3</experiments>
</comment>
<comment type="subcellular location">
    <subcellularLocation>
        <location evidence="5">Cell membrane</location>
        <topology evidence="2">Single-pass type I membrane protein</topology>
    </subcellularLocation>
    <subcellularLocation>
        <location evidence="1">Synaptic cell membrane</location>
        <topology evidence="2">Single-pass type I membrane protein</topology>
    </subcellularLocation>
    <subcellularLocation>
        <location evidence="1">Postsynaptic density</location>
    </subcellularLocation>
</comment>
<comment type="tissue specificity">
    <text>Highly expressed in brain.</text>
</comment>
<comment type="similarity">
    <text evidence="7">Belongs to the VPS10-related sortilin family. SORCS subfamily.</text>
</comment>
<name>SORC3_HUMAN</name>
<accession>Q9UPU3</accession>
<accession>Q5VXF9</accession>
<accession>Q9NQJ2</accession>
<protein>
    <recommendedName>
        <fullName>VPS10 domain-containing receptor SorCS3</fullName>
    </recommendedName>
</protein>
<evidence type="ECO:0000250" key="1">
    <source>
        <dbReference type="UniProtKB" id="Q8VI51"/>
    </source>
</evidence>
<evidence type="ECO:0000255" key="2"/>
<evidence type="ECO:0000255" key="3">
    <source>
        <dbReference type="PROSITE-ProRule" id="PRU00151"/>
    </source>
</evidence>
<evidence type="ECO:0000256" key="4">
    <source>
        <dbReference type="SAM" id="MobiDB-lite"/>
    </source>
</evidence>
<evidence type="ECO:0000269" key="5">
    <source>
    </source>
</evidence>
<evidence type="ECO:0000269" key="6">
    <source>
    </source>
</evidence>
<evidence type="ECO:0000305" key="7"/>
<feature type="signal peptide" evidence="2">
    <location>
        <begin position="1"/>
        <end position="33"/>
    </location>
</feature>
<feature type="propeptide" id="PRO_0000462587" description="Removed in mature form" evidence="5">
    <location>
        <begin position="34"/>
        <end position="133"/>
    </location>
</feature>
<feature type="chain" id="PRO_0000033174" description="VPS10 domain-containing receptor SorCS3">
    <location>
        <begin position="134"/>
        <end position="1222"/>
    </location>
</feature>
<feature type="topological domain" description="Lumenal" evidence="2">
    <location>
        <begin position="135"/>
        <end position="1125"/>
    </location>
</feature>
<feature type="transmembrane region" description="Helical" evidence="2">
    <location>
        <begin position="1126"/>
        <end position="1146"/>
    </location>
</feature>
<feature type="topological domain" description="Cytoplasmic" evidence="2">
    <location>
        <begin position="1147"/>
        <end position="1222"/>
    </location>
</feature>
<feature type="repeat" description="BNR 1">
    <location>
        <begin position="231"/>
        <end position="242"/>
    </location>
</feature>
<feature type="repeat" description="BNR 2">
    <location>
        <begin position="279"/>
        <end position="290"/>
    </location>
</feature>
<feature type="repeat" description="BNR 3">
    <location>
        <begin position="320"/>
        <end position="331"/>
    </location>
</feature>
<feature type="repeat" description="BNR 4">
    <location>
        <begin position="515"/>
        <end position="526"/>
    </location>
</feature>
<feature type="repeat" description="BNR 5">
    <location>
        <begin position="592"/>
        <end position="603"/>
    </location>
</feature>
<feature type="repeat" description="BNR 6">
    <location>
        <begin position="634"/>
        <end position="645"/>
    </location>
</feature>
<feature type="domain" description="PKD" evidence="3">
    <location>
        <begin position="827"/>
        <end position="917"/>
    </location>
</feature>
<feature type="region of interest" description="Disordered" evidence="4">
    <location>
        <begin position="40"/>
        <end position="70"/>
    </location>
</feature>
<feature type="region of interest" description="Disordered" evidence="4">
    <location>
        <begin position="87"/>
        <end position="180"/>
    </location>
</feature>
<feature type="region of interest" description="Interaction with DLG4" evidence="1">
    <location>
        <begin position="1219"/>
        <end position="1222"/>
    </location>
</feature>
<feature type="glycosylation site" description="N-linked (GlcNAc...) asparagine" evidence="2">
    <location>
        <position position="207"/>
    </location>
</feature>
<feature type="glycosylation site" description="N-linked (GlcNAc...) asparagine" evidence="2">
    <location>
        <position position="456"/>
    </location>
</feature>
<feature type="glycosylation site" description="N-linked (GlcNAc...) asparagine" evidence="2">
    <location>
        <position position="789"/>
    </location>
</feature>
<feature type="glycosylation site" description="N-linked (GlcNAc...) asparagine" evidence="2">
    <location>
        <position position="800"/>
    </location>
</feature>
<feature type="glycosylation site" description="N-linked (GlcNAc...) asparagine" evidence="2">
    <location>
        <position position="840"/>
    </location>
</feature>
<feature type="glycosylation site" description="N-linked (GlcNAc...) asparagine" evidence="2">
    <location>
        <position position="932"/>
    </location>
</feature>
<feature type="glycosylation site" description="N-linked (GlcNAc...) asparagine" evidence="2">
    <location>
        <position position="953"/>
    </location>
</feature>
<feature type="glycosylation site" description="N-linked (GlcNAc...) asparagine" evidence="2">
    <location>
        <position position="1065"/>
    </location>
</feature>
<organism>
    <name type="scientific">Homo sapiens</name>
    <name type="common">Human</name>
    <dbReference type="NCBI Taxonomy" id="9606"/>
    <lineage>
        <taxon>Eukaryota</taxon>
        <taxon>Metazoa</taxon>
        <taxon>Chordata</taxon>
        <taxon>Craniata</taxon>
        <taxon>Vertebrata</taxon>
        <taxon>Euteleostomi</taxon>
        <taxon>Mammalia</taxon>
        <taxon>Eutheria</taxon>
        <taxon>Euarchontoglires</taxon>
        <taxon>Primates</taxon>
        <taxon>Haplorrhini</taxon>
        <taxon>Catarrhini</taxon>
        <taxon>Hominidae</taxon>
        <taxon>Homo</taxon>
    </lineage>
</organism>
<reference key="1">
    <citation type="journal article" date="2001" name="Hum. Genet.">
        <title>The genes for the human VPS10 domain-containing receptors are large and contain many small exons.</title>
        <authorList>
            <person name="Hampe W."/>
            <person name="Rezgaoui M."/>
            <person name="Hermans-Borgmeyer I."/>
            <person name="Schaller H.C."/>
        </authorList>
    </citation>
    <scope>NUCLEOTIDE SEQUENCE [MRNA]</scope>
    <source>
        <tissue>Brain</tissue>
    </source>
</reference>
<reference key="2">
    <citation type="journal article" date="1999" name="DNA Res.">
        <title>Prediction of the coding sequences of unidentified human genes. XIV. The complete sequences of 100 new cDNA clones from brain which code for large proteins in vitro.</title>
        <authorList>
            <person name="Kikuno R."/>
            <person name="Nagase T."/>
            <person name="Ishikawa K."/>
            <person name="Hirosawa M."/>
            <person name="Miyajima N."/>
            <person name="Tanaka A."/>
            <person name="Kotani H."/>
            <person name="Nomura N."/>
            <person name="Ohara O."/>
        </authorList>
    </citation>
    <scope>NUCLEOTIDE SEQUENCE [LARGE SCALE MRNA]</scope>
    <source>
        <tissue>Brain</tissue>
    </source>
</reference>
<reference key="3">
    <citation type="journal article" date="2004" name="Nature">
        <title>The DNA sequence and comparative analysis of human chromosome 10.</title>
        <authorList>
            <person name="Deloukas P."/>
            <person name="Earthrowl M.E."/>
            <person name="Grafham D.V."/>
            <person name="Rubenfield M."/>
            <person name="French L."/>
            <person name="Steward C.A."/>
            <person name="Sims S.K."/>
            <person name="Jones M.C."/>
            <person name="Searle S."/>
            <person name="Scott C."/>
            <person name="Howe K."/>
            <person name="Hunt S.E."/>
            <person name="Andrews T.D."/>
            <person name="Gilbert J.G.R."/>
            <person name="Swarbreck D."/>
            <person name="Ashurst J.L."/>
            <person name="Taylor A."/>
            <person name="Battles J."/>
            <person name="Bird C.P."/>
            <person name="Ainscough R."/>
            <person name="Almeida J.P."/>
            <person name="Ashwell R.I.S."/>
            <person name="Ambrose K.D."/>
            <person name="Babbage A.K."/>
            <person name="Bagguley C.L."/>
            <person name="Bailey J."/>
            <person name="Banerjee R."/>
            <person name="Bates K."/>
            <person name="Beasley H."/>
            <person name="Bray-Allen S."/>
            <person name="Brown A.J."/>
            <person name="Brown J.Y."/>
            <person name="Burford D.C."/>
            <person name="Burrill W."/>
            <person name="Burton J."/>
            <person name="Cahill P."/>
            <person name="Camire D."/>
            <person name="Carter N.P."/>
            <person name="Chapman J.C."/>
            <person name="Clark S.Y."/>
            <person name="Clarke G."/>
            <person name="Clee C.M."/>
            <person name="Clegg S."/>
            <person name="Corby N."/>
            <person name="Coulson A."/>
            <person name="Dhami P."/>
            <person name="Dutta I."/>
            <person name="Dunn M."/>
            <person name="Faulkner L."/>
            <person name="Frankish A."/>
            <person name="Frankland J.A."/>
            <person name="Garner P."/>
            <person name="Garnett J."/>
            <person name="Gribble S."/>
            <person name="Griffiths C."/>
            <person name="Grocock R."/>
            <person name="Gustafson E."/>
            <person name="Hammond S."/>
            <person name="Harley J.L."/>
            <person name="Hart E."/>
            <person name="Heath P.D."/>
            <person name="Ho T.P."/>
            <person name="Hopkins B."/>
            <person name="Horne J."/>
            <person name="Howden P.J."/>
            <person name="Huckle E."/>
            <person name="Hynds C."/>
            <person name="Johnson C."/>
            <person name="Johnson D."/>
            <person name="Kana A."/>
            <person name="Kay M."/>
            <person name="Kimberley A.M."/>
            <person name="Kershaw J.K."/>
            <person name="Kokkinaki M."/>
            <person name="Laird G.K."/>
            <person name="Lawlor S."/>
            <person name="Lee H.M."/>
            <person name="Leongamornlert D.A."/>
            <person name="Laird G."/>
            <person name="Lloyd C."/>
            <person name="Lloyd D.M."/>
            <person name="Loveland J."/>
            <person name="Lovell J."/>
            <person name="McLaren S."/>
            <person name="McLay K.E."/>
            <person name="McMurray A."/>
            <person name="Mashreghi-Mohammadi M."/>
            <person name="Matthews L."/>
            <person name="Milne S."/>
            <person name="Nickerson T."/>
            <person name="Nguyen M."/>
            <person name="Overton-Larty E."/>
            <person name="Palmer S.A."/>
            <person name="Pearce A.V."/>
            <person name="Peck A.I."/>
            <person name="Pelan S."/>
            <person name="Phillimore B."/>
            <person name="Porter K."/>
            <person name="Rice C.M."/>
            <person name="Rogosin A."/>
            <person name="Ross M.T."/>
            <person name="Sarafidou T."/>
            <person name="Sehra H.K."/>
            <person name="Shownkeen R."/>
            <person name="Skuce C.D."/>
            <person name="Smith M."/>
            <person name="Standring L."/>
            <person name="Sycamore N."/>
            <person name="Tester J."/>
            <person name="Thorpe A."/>
            <person name="Torcasso W."/>
            <person name="Tracey A."/>
            <person name="Tromans A."/>
            <person name="Tsolas J."/>
            <person name="Wall M."/>
            <person name="Walsh J."/>
            <person name="Wang H."/>
            <person name="Weinstock K."/>
            <person name="West A.P."/>
            <person name="Willey D.L."/>
            <person name="Whitehead S.L."/>
            <person name="Wilming L."/>
            <person name="Wray P.W."/>
            <person name="Young L."/>
            <person name="Chen Y."/>
            <person name="Lovering R.C."/>
            <person name="Moschonas N.K."/>
            <person name="Siebert R."/>
            <person name="Fechtel K."/>
            <person name="Bentley D."/>
            <person name="Durbin R.M."/>
            <person name="Hubbard T."/>
            <person name="Doucette-Stamm L."/>
            <person name="Beck S."/>
            <person name="Smith D.R."/>
            <person name="Rogers J."/>
        </authorList>
    </citation>
    <scope>NUCLEOTIDE SEQUENCE [LARGE SCALE GENOMIC DNA]</scope>
</reference>
<reference key="4">
    <citation type="journal article" date="2005" name="FEBS Lett.">
        <title>SorCS3 does not require propeptide cleavage to bind nerve growth factor.</title>
        <authorList>
            <person name="Westergaard U.B."/>
            <person name="Kirkegaard K."/>
            <person name="Soerensen E.S."/>
            <person name="Jacobsen C."/>
            <person name="Nielsen M.S."/>
            <person name="Petersen C.M."/>
            <person name="Madsen P."/>
        </authorList>
    </citation>
    <scope>CLEAVAGE OF THE PROPEPTIDE</scope>
    <scope>SUBCELLULAR LOCATION</scope>
    <scope>INTERACTION WITH NGF</scope>
</reference>
<reference key="5">
    <citation type="journal article" date="2022" name="Biochem. Biophys. Res. Commun.">
        <title>Cryo-EM structure studies of the human VPS10 domain-containing receptor SorCS3.</title>
        <authorList>
            <person name="Dong F."/>
            <person name="Wu C."/>
            <person name="Jiang W."/>
            <person name="Zhai M."/>
            <person name="Li H."/>
            <person name="Zhai L."/>
            <person name="Zhang X."/>
        </authorList>
    </citation>
    <scope>STRUCTURE BY ELECTRON CRYOMICROSCOPY</scope>
    <scope>SUBUNIT</scope>
</reference>
<proteinExistence type="evidence at protein level"/>
<keyword id="KW-1003">Cell membrane</keyword>
<keyword id="KW-0165">Cleavage on pair of basic residues</keyword>
<keyword id="KW-0325">Glycoprotein</keyword>
<keyword id="KW-0472">Membrane</keyword>
<keyword id="KW-1267">Proteomics identification</keyword>
<keyword id="KW-1185">Reference proteome</keyword>
<keyword id="KW-0677">Repeat</keyword>
<keyword id="KW-0732">Signal</keyword>
<keyword id="KW-0770">Synapse</keyword>
<keyword id="KW-0812">Transmembrane</keyword>
<keyword id="KW-1133">Transmembrane helix</keyword>
<sequence>MEAARTERPAGRPGAPLVRTGLLLLSTWVLAGAEITWDATGGPGRPAAPASRPPALSPLSPRAVASQWPEELASARRAAVLGRRAGPELLPQQGGGRGGEMQVEAGGTSPAGERRGRGIPAPAKLGGARRSRRAQPPITQERGDAWATAPADGSRGSRPLAKGSREEVKAPRAGGSAAEDLRLPSTSFALTGDSAHNQAMVHWSGHNSSVILILTKLYDFNLGSVTESSLWRSTDYGTTYEKLNDKVGLKTVLSYLYVNPTNKRKIMLLSDPEMESSILISSDEGATYQKYRLTFYIQSLLFHPKQEDWVLAYSLDQKLYSSMDFGRRWQLMHERITPNRFYWSVAGLDKEADLVHMEVRTTDGYAHYLTCRIQECAETTRSGPFARSIDISSLVVQDEYIFIQVTTSGRASYYVSYRREAFAQIKLPKYSLPKDMHIISTDENQVFAAVQEWNQNDTYNLYISDTRGIYFTLAMENIKSSRGLMGNIIIELYEVAGIKGIFLANKKVDDQVKTYITYNKGRDWRLLQAPDVDLRGSPVHCLLPFCSLHLHLQLSENPYSSGRISSKETAPGLVVATGNIGPELSYTDIGVFISSDGGNTWRQIFDEEYNVWFLDWGGALVAMKHTPLPVRHLWVSFDEGHSWDKYGFTSVPLFVDGALVEAGMETHIMTVFGHFSLRSEWQLVKVDYKSIFSRHCTKEDYQTWHLLNQGEPCVMGERKIFKKRKPGAQCALGRDHSGSVVSEPCVCANWDFECDYGYERHGESQCVPAFWYNPASPSKDCSLGQSYLNSTGYRRIVSNNCTDGLREKYTAKAQMCPGKAPRGLHVVTTDGRLVAEQGHNATFIILMEEGDLQRTNIQLDFGDGIAVSYANFSPIEDGIKHVYKSAGIFQVTAYAENNLGSDTAVLFLHVVCPVEHVHLRVPFVAIRNKEVNISAVVWPSQLGTLTYFWWFGNSTKPLITLDSSISFTFLAEGTDTITVQVAAGNALIQDTKEIAVHEYFQSQLLSFSPNLDYHNPDIPEWRKDIGNVIKRALVKVTSVPEDQILIAVFPGLPTSAELFILPPKNLTERRKGNEGDLEQIVETLFNALNQNLVQFELKPGVQVIVYVTQLTLAPLVDSSAGHSSSAMLMLLSVVFVGLAVFLIYKFKRKIPWINIYAQVQHDKEQEMIGSVSQSENAPKITLSDFTEPEELLDKELDTRVIGGIATIANSESTKEIPNCTSV</sequence>
<gene>
    <name type="primary">SORCS3</name>
    <name type="synonym">KIAA1059</name>
</gene>
<dbReference type="EMBL" id="AB028982">
    <property type="protein sequence ID" value="BAA83011.2"/>
    <property type="molecule type" value="mRNA"/>
</dbReference>
<dbReference type="EMBL" id="AL161646">
    <property type="status" value="NOT_ANNOTATED_CDS"/>
    <property type="molecule type" value="Genomic_DNA"/>
</dbReference>
<dbReference type="EMBL" id="AL353900">
    <property type="status" value="NOT_ANNOTATED_CDS"/>
    <property type="molecule type" value="Genomic_DNA"/>
</dbReference>
<dbReference type="EMBL" id="AL358949">
    <property type="status" value="NOT_ANNOTATED_CDS"/>
    <property type="molecule type" value="Genomic_DNA"/>
</dbReference>
<dbReference type="EMBL" id="AL365449">
    <property type="status" value="NOT_ANNOTATED_CDS"/>
    <property type="molecule type" value="Genomic_DNA"/>
</dbReference>
<dbReference type="EMBL" id="AL445492">
    <property type="status" value="NOT_ANNOTATED_CDS"/>
    <property type="molecule type" value="Genomic_DNA"/>
</dbReference>
<dbReference type="EMBL" id="AL596118">
    <property type="status" value="NOT_ANNOTATED_CDS"/>
    <property type="molecule type" value="Genomic_DNA"/>
</dbReference>
<dbReference type="CCDS" id="CCDS7558.1"/>
<dbReference type="RefSeq" id="NP_055793.1">
    <property type="nucleotide sequence ID" value="NM_014978.3"/>
</dbReference>
<dbReference type="SMR" id="Q9UPU3"/>
<dbReference type="BioGRID" id="116635">
    <property type="interactions" value="6"/>
</dbReference>
<dbReference type="FunCoup" id="Q9UPU3">
    <property type="interactions" value="186"/>
</dbReference>
<dbReference type="IntAct" id="Q9UPU3">
    <property type="interactions" value="3"/>
</dbReference>
<dbReference type="MINT" id="Q9UPU3"/>
<dbReference type="STRING" id="9606.ENSP00000358715"/>
<dbReference type="TCDB" id="9.A.63.1.4">
    <property type="family name" value="the retromer-dependent vacuolar protein sorting (r-vps) family"/>
</dbReference>
<dbReference type="GlyCosmos" id="Q9UPU3">
    <property type="glycosylation" value="8 sites, No reported glycans"/>
</dbReference>
<dbReference type="GlyGen" id="Q9UPU3">
    <property type="glycosylation" value="8 sites"/>
</dbReference>
<dbReference type="iPTMnet" id="Q9UPU3"/>
<dbReference type="PhosphoSitePlus" id="Q9UPU3"/>
<dbReference type="BioMuta" id="SORCS3"/>
<dbReference type="DMDM" id="27151703"/>
<dbReference type="MassIVE" id="Q9UPU3"/>
<dbReference type="PaxDb" id="9606-ENSP00000358715"/>
<dbReference type="PeptideAtlas" id="Q9UPU3"/>
<dbReference type="ProteomicsDB" id="85445"/>
<dbReference type="Antibodypedia" id="31628">
    <property type="antibodies" value="63 antibodies from 14 providers"/>
</dbReference>
<dbReference type="DNASU" id="22986"/>
<dbReference type="Ensembl" id="ENST00000369701.8">
    <property type="protein sequence ID" value="ENSP00000358715.3"/>
    <property type="gene ID" value="ENSG00000156395.14"/>
</dbReference>
<dbReference type="GeneID" id="22986"/>
<dbReference type="KEGG" id="hsa:22986"/>
<dbReference type="MANE-Select" id="ENST00000369701.8">
    <property type="protein sequence ID" value="ENSP00000358715.3"/>
    <property type="RefSeq nucleotide sequence ID" value="NM_014978.3"/>
    <property type="RefSeq protein sequence ID" value="NP_055793.1"/>
</dbReference>
<dbReference type="UCSC" id="uc001kyi.1">
    <property type="organism name" value="human"/>
</dbReference>
<dbReference type="AGR" id="HGNC:16699"/>
<dbReference type="CTD" id="22986"/>
<dbReference type="DisGeNET" id="22986"/>
<dbReference type="GeneCards" id="SORCS3"/>
<dbReference type="HGNC" id="HGNC:16699">
    <property type="gene designation" value="SORCS3"/>
</dbReference>
<dbReference type="HPA" id="ENSG00000156395">
    <property type="expression patterns" value="Group enriched (adrenal gland, brain)"/>
</dbReference>
<dbReference type="MIM" id="606285">
    <property type="type" value="gene"/>
</dbReference>
<dbReference type="neXtProt" id="NX_Q9UPU3"/>
<dbReference type="OpenTargets" id="ENSG00000156395"/>
<dbReference type="PharmGKB" id="PA134949387"/>
<dbReference type="VEuPathDB" id="HostDB:ENSG00000156395"/>
<dbReference type="eggNOG" id="KOG3511">
    <property type="taxonomic scope" value="Eukaryota"/>
</dbReference>
<dbReference type="GeneTree" id="ENSGT01030000234563"/>
<dbReference type="HOGENOM" id="CLU_010702_0_0_1"/>
<dbReference type="InParanoid" id="Q9UPU3"/>
<dbReference type="OMA" id="RRNDGNC"/>
<dbReference type="OrthoDB" id="443634at2759"/>
<dbReference type="PAN-GO" id="Q9UPU3">
    <property type="GO annotations" value="1 GO annotation based on evolutionary models"/>
</dbReference>
<dbReference type="PhylomeDB" id="Q9UPU3"/>
<dbReference type="TreeFam" id="TF324918"/>
<dbReference type="PathwayCommons" id="Q9UPU3"/>
<dbReference type="SignaLink" id="Q9UPU3"/>
<dbReference type="BioGRID-ORCS" id="22986">
    <property type="hits" value="10 hits in 1151 CRISPR screens"/>
</dbReference>
<dbReference type="ChiTaRS" id="SORCS3">
    <property type="organism name" value="human"/>
</dbReference>
<dbReference type="GenomeRNAi" id="22986"/>
<dbReference type="Pharos" id="Q9UPU3">
    <property type="development level" value="Tbio"/>
</dbReference>
<dbReference type="PRO" id="PR:Q9UPU3"/>
<dbReference type="Proteomes" id="UP000005640">
    <property type="component" value="Chromosome 10"/>
</dbReference>
<dbReference type="RNAct" id="Q9UPU3">
    <property type="molecule type" value="protein"/>
</dbReference>
<dbReference type="Bgee" id="ENSG00000156395">
    <property type="expression patterns" value="Expressed in ventricular zone and 86 other cell types or tissues"/>
</dbReference>
<dbReference type="ExpressionAtlas" id="Q9UPU3">
    <property type="expression patterns" value="baseline and differential"/>
</dbReference>
<dbReference type="GO" id="GO:0098978">
    <property type="term" value="C:glutamatergic synapse"/>
    <property type="evidence" value="ECO:0007669"/>
    <property type="project" value="Ensembl"/>
</dbReference>
<dbReference type="GO" id="GO:0016020">
    <property type="term" value="C:membrane"/>
    <property type="evidence" value="ECO:0000303"/>
    <property type="project" value="UniProtKB"/>
</dbReference>
<dbReference type="GO" id="GO:0098839">
    <property type="term" value="C:postsynaptic density membrane"/>
    <property type="evidence" value="ECO:0000318"/>
    <property type="project" value="GO_Central"/>
</dbReference>
<dbReference type="GO" id="GO:0008188">
    <property type="term" value="F:neuropeptide receptor activity"/>
    <property type="evidence" value="ECO:0000303"/>
    <property type="project" value="UniProtKB"/>
</dbReference>
<dbReference type="GO" id="GO:0007612">
    <property type="term" value="P:learning"/>
    <property type="evidence" value="ECO:0007669"/>
    <property type="project" value="Ensembl"/>
</dbReference>
<dbReference type="GO" id="GO:0007613">
    <property type="term" value="P:memory"/>
    <property type="evidence" value="ECO:0007669"/>
    <property type="project" value="Ensembl"/>
</dbReference>
<dbReference type="GO" id="GO:0007218">
    <property type="term" value="P:neuropeptide signaling pathway"/>
    <property type="evidence" value="ECO:0000303"/>
    <property type="project" value="UniProtKB"/>
</dbReference>
<dbReference type="GO" id="GO:0099170">
    <property type="term" value="P:postsynaptic modulation of chemical synaptic transmission"/>
    <property type="evidence" value="ECO:0007669"/>
    <property type="project" value="Ensembl"/>
</dbReference>
<dbReference type="GO" id="GO:1900452">
    <property type="term" value="P:regulation of long-term synaptic depression"/>
    <property type="evidence" value="ECO:0007669"/>
    <property type="project" value="Ensembl"/>
</dbReference>
<dbReference type="FunFam" id="3.30.60.270:FF:000001">
    <property type="entry name" value="Sortilin related VPS10 domain containing receptor 1"/>
    <property type="match status" value="1"/>
</dbReference>
<dbReference type="FunFam" id="2.60.40.10:FF:000083">
    <property type="entry name" value="Sortilin-related VPS10 domain containing receptor 2"/>
    <property type="match status" value="1"/>
</dbReference>
<dbReference type="FunFam" id="2.10.70.80:FF:000001">
    <property type="entry name" value="Sortilin-related VPS10 domain-containing receptor 1"/>
    <property type="match status" value="1"/>
</dbReference>
<dbReference type="FunFam" id="2.130.10.10:FF:000388">
    <property type="entry name" value="VPS10 domain-containing receptor SorCS3"/>
    <property type="match status" value="1"/>
</dbReference>
<dbReference type="Gene3D" id="2.10.70.80">
    <property type="match status" value="1"/>
</dbReference>
<dbReference type="Gene3D" id="3.30.60.270">
    <property type="match status" value="1"/>
</dbReference>
<dbReference type="Gene3D" id="2.60.40.10">
    <property type="entry name" value="Immunoglobulins"/>
    <property type="match status" value="1"/>
</dbReference>
<dbReference type="Gene3D" id="2.130.10.10">
    <property type="entry name" value="YVTN repeat-like/Quinoprotein amine dehydrogenase"/>
    <property type="match status" value="1"/>
</dbReference>
<dbReference type="InterPro" id="IPR013783">
    <property type="entry name" value="Ig-like_fold"/>
</dbReference>
<dbReference type="InterPro" id="IPR000601">
    <property type="entry name" value="PKD_dom"/>
</dbReference>
<dbReference type="InterPro" id="IPR035986">
    <property type="entry name" value="PKD_dom_sf"/>
</dbReference>
<dbReference type="InterPro" id="IPR031777">
    <property type="entry name" value="Sortilin_C"/>
</dbReference>
<dbReference type="InterPro" id="IPR031778">
    <property type="entry name" value="Sortilin_N"/>
</dbReference>
<dbReference type="InterPro" id="IPR006581">
    <property type="entry name" value="VPS10"/>
</dbReference>
<dbReference type="InterPro" id="IPR050310">
    <property type="entry name" value="VPS10-sortilin"/>
</dbReference>
<dbReference type="InterPro" id="IPR015943">
    <property type="entry name" value="WD40/YVTN_repeat-like_dom_sf"/>
</dbReference>
<dbReference type="PANTHER" id="PTHR12106">
    <property type="entry name" value="SORTILIN RELATED"/>
    <property type="match status" value="1"/>
</dbReference>
<dbReference type="PANTHER" id="PTHR12106:SF10">
    <property type="entry name" value="VPS10 DOMAIN-CONTAINING RECEPTOR SORCS3"/>
    <property type="match status" value="1"/>
</dbReference>
<dbReference type="Pfam" id="PF00801">
    <property type="entry name" value="PKD"/>
    <property type="match status" value="1"/>
</dbReference>
<dbReference type="Pfam" id="PF15902">
    <property type="entry name" value="Sortilin-Vps10"/>
    <property type="match status" value="1"/>
</dbReference>
<dbReference type="Pfam" id="PF15901">
    <property type="entry name" value="Sortilin_C"/>
    <property type="match status" value="1"/>
</dbReference>
<dbReference type="SMART" id="SM00602">
    <property type="entry name" value="VPS10"/>
    <property type="match status" value="1"/>
</dbReference>
<dbReference type="SUPFAM" id="SSF110296">
    <property type="entry name" value="Oligoxyloglucan reducing end-specific cellobiohydrolase"/>
    <property type="match status" value="1"/>
</dbReference>
<dbReference type="SUPFAM" id="SSF49299">
    <property type="entry name" value="PKD domain"/>
    <property type="match status" value="2"/>
</dbReference>
<dbReference type="PROSITE" id="PS50093">
    <property type="entry name" value="PKD"/>
    <property type="match status" value="1"/>
</dbReference>